<sequence length="256" mass="30040">MPLHKVPVGLWKRLRLREGIYSRLPAHYLRSLEEARTPTPVHFRPHGAKFKINPKNGQRERVEDVPIPVHYPPESQLGLWGGEGWLKGHRYVNNDKFSKRVKKVWKPQLFQRELYSEILDTRFTVTVTMRTLDLIDEAYGFDFYILKTPKEDLCSKFGMDLKRGMLLRLARQDPQLHPDDPERRAAIYDKYKAFVIPEAEAEWVGLTLDEAVEKQRLLEEKDPVPLFKVYVEELVEQLQQQALSEPAVVQKRANRT</sequence>
<proteinExistence type="evidence at protein level"/>
<protein>
    <recommendedName>
        <fullName evidence="4">Large ribosomal subunit protein bL28m</fullName>
    </recommendedName>
    <alternativeName>
        <fullName>39S ribosomal protein L28, mitochondrial</fullName>
        <shortName>L28mt</shortName>
        <shortName>MRP-L28</shortName>
    </alternativeName>
</protein>
<comment type="subunit">
    <text evidence="1 3">Component of the mitochondrial ribosome large subunit (39S) which comprises a 16S rRNA and about 50 distinct proteins (By similarity). Interacts with OXA1L (PubMed:20601428).</text>
</comment>
<comment type="subcellular location">
    <subcellularLocation>
        <location evidence="2">Mitochondrion</location>
    </subcellularLocation>
</comment>
<comment type="similarity">
    <text evidence="4">Belongs to the bacterial ribosomal protein bL28 family.</text>
</comment>
<organism>
    <name type="scientific">Bos taurus</name>
    <name type="common">Bovine</name>
    <dbReference type="NCBI Taxonomy" id="9913"/>
    <lineage>
        <taxon>Eukaryota</taxon>
        <taxon>Metazoa</taxon>
        <taxon>Chordata</taxon>
        <taxon>Craniata</taxon>
        <taxon>Vertebrata</taxon>
        <taxon>Euteleostomi</taxon>
        <taxon>Mammalia</taxon>
        <taxon>Eutheria</taxon>
        <taxon>Laurasiatheria</taxon>
        <taxon>Artiodactyla</taxon>
        <taxon>Ruminantia</taxon>
        <taxon>Pecora</taxon>
        <taxon>Bovidae</taxon>
        <taxon>Bovinae</taxon>
        <taxon>Bos</taxon>
    </lineage>
</organism>
<reference key="1">
    <citation type="submission" date="2005-09" db="EMBL/GenBank/DDBJ databases">
        <authorList>
            <consortium name="NIH - Mammalian Gene Collection (MGC) project"/>
        </authorList>
    </citation>
    <scope>NUCLEOTIDE SEQUENCE [LARGE SCALE MRNA]</scope>
    <source>
        <strain>Crossbred X Angus</strain>
        <tissue>Ileum</tissue>
    </source>
</reference>
<reference key="2">
    <citation type="journal article" date="2001" name="J. Biol. Chem.">
        <title>The large subunit of the mammalian mitochondrial ribosome. Analysis of the complement of ribosomal proteins present.</title>
        <authorList>
            <person name="Koc E.C."/>
            <person name="Burkhart W."/>
            <person name="Blackburn K."/>
            <person name="Moyer M.B."/>
            <person name="Schlatzer D.M."/>
            <person name="Moseley A."/>
            <person name="Spremulli L.L."/>
        </authorList>
    </citation>
    <scope>PROTEIN SEQUENCE OF 56-87</scope>
    <scope>SUBCELLULAR LOCATION</scope>
    <scope>IDENTIFICATION BY MASS SPECTROMETRY</scope>
</reference>
<reference key="3">
    <citation type="journal article" date="2010" name="J. Biol. Chem.">
        <title>Properties of the C-terminal tail of human mitochondrial inner membrane protein Oxa1L and its interactions with mammalian mitochondrial ribosomes.</title>
        <authorList>
            <person name="Haque M.E."/>
            <person name="Elmore K.B."/>
            <person name="Tripathy A."/>
            <person name="Koc H."/>
            <person name="Koc E.C."/>
            <person name="Spremulli L.L."/>
        </authorList>
    </citation>
    <scope>INTERACTION WITH OXA1L</scope>
    <scope>IDENTIFICATION BY MASS SPECTROMETRY</scope>
</reference>
<feature type="transit peptide" description="Mitochondrion" evidence="2">
    <location>
        <begin position="1"/>
        <end position="55"/>
    </location>
</feature>
<feature type="chain" id="PRO_0000283812" description="Large ribosomal subunit protein bL28m">
    <location>
        <begin position="56"/>
        <end position="256"/>
    </location>
</feature>
<gene>
    <name type="primary">MRPL28</name>
</gene>
<keyword id="KW-0903">Direct protein sequencing</keyword>
<keyword id="KW-0496">Mitochondrion</keyword>
<keyword id="KW-1185">Reference proteome</keyword>
<keyword id="KW-0687">Ribonucleoprotein</keyword>
<keyword id="KW-0689">Ribosomal protein</keyword>
<keyword id="KW-0809">Transit peptide</keyword>
<evidence type="ECO:0000250" key="1">
    <source>
        <dbReference type="UniProtKB" id="Q13084"/>
    </source>
</evidence>
<evidence type="ECO:0000269" key="2">
    <source>
    </source>
</evidence>
<evidence type="ECO:0000269" key="3">
    <source>
    </source>
</evidence>
<evidence type="ECO:0000305" key="4"/>
<dbReference type="EMBL" id="BC105311">
    <property type="protein sequence ID" value="AAI05312.1"/>
    <property type="molecule type" value="mRNA"/>
</dbReference>
<dbReference type="RefSeq" id="NP_001039461.1">
    <property type="nucleotide sequence ID" value="NM_001045996.2"/>
</dbReference>
<dbReference type="SMR" id="Q2HJJ1"/>
<dbReference type="FunCoup" id="Q2HJJ1">
    <property type="interactions" value="1286"/>
</dbReference>
<dbReference type="STRING" id="9913.ENSBTAP00000022057"/>
<dbReference type="iPTMnet" id="Q2HJJ1"/>
<dbReference type="PaxDb" id="9913-ENSBTAP00000022057"/>
<dbReference type="GeneID" id="508216"/>
<dbReference type="KEGG" id="bta:508216"/>
<dbReference type="CTD" id="10573"/>
<dbReference type="eggNOG" id="KOG3279">
    <property type="taxonomic scope" value="Eukaryota"/>
</dbReference>
<dbReference type="HOGENOM" id="CLU_078055_0_0_1"/>
<dbReference type="InParanoid" id="Q2HJJ1"/>
<dbReference type="OrthoDB" id="361870at2759"/>
<dbReference type="TreeFam" id="TF313040"/>
<dbReference type="Proteomes" id="UP000009136">
    <property type="component" value="Unplaced"/>
</dbReference>
<dbReference type="GO" id="GO:0005743">
    <property type="term" value="C:mitochondrial inner membrane"/>
    <property type="evidence" value="ECO:0000304"/>
    <property type="project" value="Reactome"/>
</dbReference>
<dbReference type="GO" id="GO:0005762">
    <property type="term" value="C:mitochondrial large ribosomal subunit"/>
    <property type="evidence" value="ECO:0000250"/>
    <property type="project" value="UniProtKB"/>
</dbReference>
<dbReference type="GO" id="GO:0005761">
    <property type="term" value="C:mitochondrial ribosome"/>
    <property type="evidence" value="ECO:0000250"/>
    <property type="project" value="UniProtKB"/>
</dbReference>
<dbReference type="GO" id="GO:0003735">
    <property type="term" value="F:structural constituent of ribosome"/>
    <property type="evidence" value="ECO:0000318"/>
    <property type="project" value="GO_Central"/>
</dbReference>
<dbReference type="Gene3D" id="2.30.170.40">
    <property type="entry name" value="Ribosomal protein L28/L24"/>
    <property type="match status" value="1"/>
</dbReference>
<dbReference type="InterPro" id="IPR026569">
    <property type="entry name" value="Ribosomal_bL28"/>
</dbReference>
<dbReference type="InterPro" id="IPR034704">
    <property type="entry name" value="Ribosomal_bL28/bL31-like_sf"/>
</dbReference>
<dbReference type="InterPro" id="IPR037147">
    <property type="entry name" value="Ribosomal_bL28_sf"/>
</dbReference>
<dbReference type="PANTHER" id="PTHR13528">
    <property type="entry name" value="39S RIBOSOMAL PROTEIN L28, MITOCHONDRIAL"/>
    <property type="match status" value="1"/>
</dbReference>
<dbReference type="PANTHER" id="PTHR13528:SF2">
    <property type="entry name" value="LARGE RIBOSOMAL SUBUNIT PROTEIN BL28M"/>
    <property type="match status" value="1"/>
</dbReference>
<dbReference type="Pfam" id="PF00830">
    <property type="entry name" value="Ribosomal_L28"/>
    <property type="match status" value="1"/>
</dbReference>
<dbReference type="SUPFAM" id="SSF143800">
    <property type="entry name" value="L28p-like"/>
    <property type="match status" value="1"/>
</dbReference>
<name>RM28_BOVIN</name>
<accession>Q2HJJ1</accession>